<proteinExistence type="inferred from homology"/>
<organism>
    <name type="scientific">Porphyromonas gingivalis (strain ATCC 33277 / DSM 20709 / CIP 103683 / JCM 12257 / NCTC 11834 / 2561)</name>
    <dbReference type="NCBI Taxonomy" id="431947"/>
    <lineage>
        <taxon>Bacteria</taxon>
        <taxon>Pseudomonadati</taxon>
        <taxon>Bacteroidota</taxon>
        <taxon>Bacteroidia</taxon>
        <taxon>Bacteroidales</taxon>
        <taxon>Porphyromonadaceae</taxon>
        <taxon>Porphyromonas</taxon>
    </lineage>
</organism>
<comment type="catalytic activity">
    <reaction evidence="1">
        <text>GTP + H2O = 7,8-dihydroneopterin 3'-triphosphate + formate + H(+)</text>
        <dbReference type="Rhea" id="RHEA:17473"/>
        <dbReference type="ChEBI" id="CHEBI:15377"/>
        <dbReference type="ChEBI" id="CHEBI:15378"/>
        <dbReference type="ChEBI" id="CHEBI:15740"/>
        <dbReference type="ChEBI" id="CHEBI:37565"/>
        <dbReference type="ChEBI" id="CHEBI:58462"/>
        <dbReference type="EC" id="3.5.4.16"/>
    </reaction>
</comment>
<comment type="pathway">
    <text evidence="1">Cofactor biosynthesis; 7,8-dihydroneopterin triphosphate biosynthesis; 7,8-dihydroneopterin triphosphate from GTP: step 1/1.</text>
</comment>
<comment type="subunit">
    <text evidence="1">Homomer.</text>
</comment>
<comment type="similarity">
    <text evidence="1">Belongs to the GTP cyclohydrolase I family.</text>
</comment>
<dbReference type="EC" id="3.5.4.16" evidence="1"/>
<dbReference type="EMBL" id="AP009380">
    <property type="protein sequence ID" value="BAG33186.1"/>
    <property type="molecule type" value="Genomic_DNA"/>
</dbReference>
<dbReference type="RefSeq" id="WP_004585175.1">
    <property type="nucleotide sequence ID" value="NZ_CP025930.1"/>
</dbReference>
<dbReference type="SMR" id="B2RIJ1"/>
<dbReference type="GeneID" id="57240664"/>
<dbReference type="KEGG" id="pgn:PGN_0667"/>
<dbReference type="eggNOG" id="COG0302">
    <property type="taxonomic scope" value="Bacteria"/>
</dbReference>
<dbReference type="HOGENOM" id="CLU_049768_2_0_10"/>
<dbReference type="OrthoDB" id="9801207at2"/>
<dbReference type="BioCyc" id="PGIN431947:G1G2V-732-MONOMER"/>
<dbReference type="UniPathway" id="UPA00848">
    <property type="reaction ID" value="UER00151"/>
</dbReference>
<dbReference type="Proteomes" id="UP000008842">
    <property type="component" value="Chromosome"/>
</dbReference>
<dbReference type="GO" id="GO:0005737">
    <property type="term" value="C:cytoplasm"/>
    <property type="evidence" value="ECO:0007669"/>
    <property type="project" value="TreeGrafter"/>
</dbReference>
<dbReference type="GO" id="GO:0005525">
    <property type="term" value="F:GTP binding"/>
    <property type="evidence" value="ECO:0007669"/>
    <property type="project" value="UniProtKB-KW"/>
</dbReference>
<dbReference type="GO" id="GO:0003934">
    <property type="term" value="F:GTP cyclohydrolase I activity"/>
    <property type="evidence" value="ECO:0007669"/>
    <property type="project" value="UniProtKB-UniRule"/>
</dbReference>
<dbReference type="GO" id="GO:0008270">
    <property type="term" value="F:zinc ion binding"/>
    <property type="evidence" value="ECO:0007669"/>
    <property type="project" value="UniProtKB-UniRule"/>
</dbReference>
<dbReference type="GO" id="GO:0006730">
    <property type="term" value="P:one-carbon metabolic process"/>
    <property type="evidence" value="ECO:0007669"/>
    <property type="project" value="UniProtKB-UniRule"/>
</dbReference>
<dbReference type="GO" id="GO:0006729">
    <property type="term" value="P:tetrahydrobiopterin biosynthetic process"/>
    <property type="evidence" value="ECO:0007669"/>
    <property type="project" value="TreeGrafter"/>
</dbReference>
<dbReference type="GO" id="GO:0046654">
    <property type="term" value="P:tetrahydrofolate biosynthetic process"/>
    <property type="evidence" value="ECO:0007669"/>
    <property type="project" value="UniProtKB-UniRule"/>
</dbReference>
<dbReference type="FunFam" id="1.10.286.10:FF:000003">
    <property type="entry name" value="GTP cyclohydrolase 1"/>
    <property type="match status" value="1"/>
</dbReference>
<dbReference type="FunFam" id="3.30.1130.10:FF:000001">
    <property type="entry name" value="GTP cyclohydrolase 1"/>
    <property type="match status" value="1"/>
</dbReference>
<dbReference type="Gene3D" id="1.10.286.10">
    <property type="match status" value="1"/>
</dbReference>
<dbReference type="Gene3D" id="3.30.1130.10">
    <property type="match status" value="1"/>
</dbReference>
<dbReference type="HAMAP" id="MF_00223">
    <property type="entry name" value="FolE"/>
    <property type="match status" value="1"/>
</dbReference>
<dbReference type="InterPro" id="IPR043133">
    <property type="entry name" value="GTP-CH-I_C/QueF"/>
</dbReference>
<dbReference type="InterPro" id="IPR043134">
    <property type="entry name" value="GTP-CH-I_N"/>
</dbReference>
<dbReference type="InterPro" id="IPR001474">
    <property type="entry name" value="GTP_CycHdrlase_I"/>
</dbReference>
<dbReference type="InterPro" id="IPR018234">
    <property type="entry name" value="GTP_CycHdrlase_I_CS"/>
</dbReference>
<dbReference type="InterPro" id="IPR020602">
    <property type="entry name" value="GTP_CycHdrlase_I_dom"/>
</dbReference>
<dbReference type="NCBIfam" id="TIGR00063">
    <property type="entry name" value="folE"/>
    <property type="match status" value="1"/>
</dbReference>
<dbReference type="NCBIfam" id="NF006825">
    <property type="entry name" value="PRK09347.1-2"/>
    <property type="match status" value="1"/>
</dbReference>
<dbReference type="NCBIfam" id="NF006826">
    <property type="entry name" value="PRK09347.1-3"/>
    <property type="match status" value="1"/>
</dbReference>
<dbReference type="PANTHER" id="PTHR11109:SF7">
    <property type="entry name" value="GTP CYCLOHYDROLASE 1"/>
    <property type="match status" value="1"/>
</dbReference>
<dbReference type="PANTHER" id="PTHR11109">
    <property type="entry name" value="GTP CYCLOHYDROLASE I"/>
    <property type="match status" value="1"/>
</dbReference>
<dbReference type="Pfam" id="PF01227">
    <property type="entry name" value="GTP_cyclohydroI"/>
    <property type="match status" value="1"/>
</dbReference>
<dbReference type="SUPFAM" id="SSF55620">
    <property type="entry name" value="Tetrahydrobiopterin biosynthesis enzymes-like"/>
    <property type="match status" value="1"/>
</dbReference>
<dbReference type="PROSITE" id="PS00859">
    <property type="entry name" value="GTP_CYCLOHYDROL_1_1"/>
    <property type="match status" value="1"/>
</dbReference>
<dbReference type="PROSITE" id="PS00860">
    <property type="entry name" value="GTP_CYCLOHYDROL_1_2"/>
    <property type="match status" value="1"/>
</dbReference>
<reference key="1">
    <citation type="journal article" date="2008" name="DNA Res.">
        <title>Determination of the genome sequence of Porphyromonas gingivalis strain ATCC 33277 and genomic comparison with strain W83 revealed extensive genome rearrangements in P. gingivalis.</title>
        <authorList>
            <person name="Naito M."/>
            <person name="Hirakawa H."/>
            <person name="Yamashita A."/>
            <person name="Ohara N."/>
            <person name="Shoji M."/>
            <person name="Yukitake H."/>
            <person name="Nakayama K."/>
            <person name="Toh H."/>
            <person name="Yoshimura F."/>
            <person name="Kuhara S."/>
            <person name="Hattori M."/>
            <person name="Hayashi T."/>
            <person name="Nakayama K."/>
        </authorList>
    </citation>
    <scope>NUCLEOTIDE SEQUENCE [LARGE SCALE GENOMIC DNA]</scope>
    <source>
        <strain>ATCC 33277 / DSM 20709 / CIP 103683 / JCM 12257 / NCTC 11834 / 2561</strain>
    </source>
</reference>
<feature type="chain" id="PRO_1000100188" description="GTP cyclohydrolase 1">
    <location>
        <begin position="1"/>
        <end position="193"/>
    </location>
</feature>
<feature type="binding site" evidence="1">
    <location>
        <position position="83"/>
    </location>
    <ligand>
        <name>Zn(2+)</name>
        <dbReference type="ChEBI" id="CHEBI:29105"/>
    </ligand>
</feature>
<feature type="binding site" evidence="1">
    <location>
        <position position="86"/>
    </location>
    <ligand>
        <name>Zn(2+)</name>
        <dbReference type="ChEBI" id="CHEBI:29105"/>
    </ligand>
</feature>
<feature type="binding site" evidence="1">
    <location>
        <position position="154"/>
    </location>
    <ligand>
        <name>Zn(2+)</name>
        <dbReference type="ChEBI" id="CHEBI:29105"/>
    </ligand>
</feature>
<name>GCH1_PORG3</name>
<sequence length="193" mass="22302">MTEIEKEEACSRLQQHYAQVLSLLGEDPKREGLLKTPLRVAKAMQFLTKGYNEDPEAILRAAMFEEDYQQMVIVKDIDFFSMCEHHMLPFFGKAHVGYIPNRYITGLSKLPRVVDVFARRLQVQERLTTQIKECIQNTLNPLGVIVVIEAQHMCMQMRGVEKQNSLTTTSDFTGAFEESTTREEFLNLIGRRR</sequence>
<gene>
    <name evidence="1" type="primary">folE</name>
    <name type="ordered locus">PGN_0667</name>
</gene>
<accession>B2RIJ1</accession>
<protein>
    <recommendedName>
        <fullName evidence="1">GTP cyclohydrolase 1</fullName>
        <ecNumber evidence="1">3.5.4.16</ecNumber>
    </recommendedName>
    <alternativeName>
        <fullName evidence="1">GTP cyclohydrolase I</fullName>
        <shortName evidence="1">GTP-CH-I</shortName>
    </alternativeName>
</protein>
<evidence type="ECO:0000255" key="1">
    <source>
        <dbReference type="HAMAP-Rule" id="MF_00223"/>
    </source>
</evidence>
<keyword id="KW-0342">GTP-binding</keyword>
<keyword id="KW-0378">Hydrolase</keyword>
<keyword id="KW-0479">Metal-binding</keyword>
<keyword id="KW-0547">Nucleotide-binding</keyword>
<keyword id="KW-0554">One-carbon metabolism</keyword>
<keyword id="KW-0862">Zinc</keyword>